<protein>
    <recommendedName>
        <fullName evidence="1">tRNA pseudouridine synthase B</fullName>
        <ecNumber evidence="1">5.4.99.25</ecNumber>
    </recommendedName>
    <alternativeName>
        <fullName evidence="1">tRNA pseudouridine(55) synthase</fullName>
        <shortName evidence="1">Psi55 synthase</shortName>
    </alternativeName>
    <alternativeName>
        <fullName evidence="1">tRNA pseudouridylate synthase</fullName>
    </alternativeName>
    <alternativeName>
        <fullName evidence="1">tRNA-uridine isomerase</fullName>
    </alternativeName>
</protein>
<evidence type="ECO:0000255" key="1">
    <source>
        <dbReference type="HAMAP-Rule" id="MF_01080"/>
    </source>
</evidence>
<accession>Q3Z7U5</accession>
<feature type="chain" id="PRO_0000229354" description="tRNA pseudouridine synthase B">
    <location>
        <begin position="1"/>
        <end position="300"/>
    </location>
</feature>
<feature type="active site" description="Nucleophile" evidence="1">
    <location>
        <position position="38"/>
    </location>
</feature>
<comment type="function">
    <text evidence="1">Responsible for synthesis of pseudouridine from uracil-55 in the psi GC loop of transfer RNAs.</text>
</comment>
<comment type="catalytic activity">
    <reaction evidence="1">
        <text>uridine(55) in tRNA = pseudouridine(55) in tRNA</text>
        <dbReference type="Rhea" id="RHEA:42532"/>
        <dbReference type="Rhea" id="RHEA-COMP:10101"/>
        <dbReference type="Rhea" id="RHEA-COMP:10102"/>
        <dbReference type="ChEBI" id="CHEBI:65314"/>
        <dbReference type="ChEBI" id="CHEBI:65315"/>
        <dbReference type="EC" id="5.4.99.25"/>
    </reaction>
</comment>
<comment type="similarity">
    <text evidence="1">Belongs to the pseudouridine synthase TruB family. Type 1 subfamily.</text>
</comment>
<sequence length="300" mass="32936">MNGILNINKPPGLTSFGVVSKVRHIYSQKKVGHGGMLDPSATGVIPVFLGSATRLIEYLSSVRKTYLAEIELGTETDSYDSEGEITSRKSCEHITADMVRNALPDFLGEITQIPPMYSAVKHRGVRLYNLARQGIEVERNPRKAAIYGIEFLGFASPVLRLRIECGHGTYIRSIAFDLGRKLGCGAYLKTLVRESYGPFHLTTSLDLADLEAAENKGRLADILLPPEAAVGHLPRITLDDESITRLVNGLEIRLEMTGQPEAMAVYSAENRFAAVIRPETDGSWHPAKVFLSPCPKKNAD</sequence>
<organism>
    <name type="scientific">Dehalococcoides mccartyi (strain ATCC BAA-2266 / KCTC 15142 / 195)</name>
    <name type="common">Dehalococcoides ethenogenes (strain 195)</name>
    <dbReference type="NCBI Taxonomy" id="243164"/>
    <lineage>
        <taxon>Bacteria</taxon>
        <taxon>Bacillati</taxon>
        <taxon>Chloroflexota</taxon>
        <taxon>Dehalococcoidia</taxon>
        <taxon>Dehalococcoidales</taxon>
        <taxon>Dehalococcoidaceae</taxon>
        <taxon>Dehalococcoides</taxon>
    </lineage>
</organism>
<dbReference type="EC" id="5.4.99.25" evidence="1"/>
<dbReference type="EMBL" id="CP000027">
    <property type="protein sequence ID" value="AAW39800.1"/>
    <property type="molecule type" value="Genomic_DNA"/>
</dbReference>
<dbReference type="RefSeq" id="WP_010936683.1">
    <property type="nucleotide sequence ID" value="NC_002936.3"/>
</dbReference>
<dbReference type="SMR" id="Q3Z7U5"/>
<dbReference type="FunCoup" id="Q3Z7U5">
    <property type="interactions" value="277"/>
</dbReference>
<dbReference type="STRING" id="243164.DET0981"/>
<dbReference type="GeneID" id="3229762"/>
<dbReference type="KEGG" id="det:DET0981"/>
<dbReference type="PATRIC" id="fig|243164.10.peg.930"/>
<dbReference type="eggNOG" id="COG0130">
    <property type="taxonomic scope" value="Bacteria"/>
</dbReference>
<dbReference type="HOGENOM" id="CLU_032087_0_1_0"/>
<dbReference type="InParanoid" id="Q3Z7U5"/>
<dbReference type="Proteomes" id="UP000008289">
    <property type="component" value="Chromosome"/>
</dbReference>
<dbReference type="GO" id="GO:0003723">
    <property type="term" value="F:RNA binding"/>
    <property type="evidence" value="ECO:0007669"/>
    <property type="project" value="InterPro"/>
</dbReference>
<dbReference type="GO" id="GO:0160148">
    <property type="term" value="F:tRNA pseudouridine(55) synthase activity"/>
    <property type="evidence" value="ECO:0007669"/>
    <property type="project" value="UniProtKB-EC"/>
</dbReference>
<dbReference type="GO" id="GO:1990481">
    <property type="term" value="P:mRNA pseudouridine synthesis"/>
    <property type="evidence" value="ECO:0007669"/>
    <property type="project" value="TreeGrafter"/>
</dbReference>
<dbReference type="GO" id="GO:0031119">
    <property type="term" value="P:tRNA pseudouridine synthesis"/>
    <property type="evidence" value="ECO:0007669"/>
    <property type="project" value="UniProtKB-UniRule"/>
</dbReference>
<dbReference type="CDD" id="cd02573">
    <property type="entry name" value="PseudoU_synth_EcTruB"/>
    <property type="match status" value="1"/>
</dbReference>
<dbReference type="Gene3D" id="3.30.2350.10">
    <property type="entry name" value="Pseudouridine synthase"/>
    <property type="match status" value="1"/>
</dbReference>
<dbReference type="HAMAP" id="MF_01080">
    <property type="entry name" value="TruB_bact"/>
    <property type="match status" value="1"/>
</dbReference>
<dbReference type="InterPro" id="IPR020103">
    <property type="entry name" value="PsdUridine_synth_cat_dom_sf"/>
</dbReference>
<dbReference type="InterPro" id="IPR002501">
    <property type="entry name" value="PsdUridine_synth_N"/>
</dbReference>
<dbReference type="InterPro" id="IPR014780">
    <property type="entry name" value="tRNA_psdUridine_synth_TruB"/>
</dbReference>
<dbReference type="InterPro" id="IPR032819">
    <property type="entry name" value="TruB_C"/>
</dbReference>
<dbReference type="NCBIfam" id="TIGR00431">
    <property type="entry name" value="TruB"/>
    <property type="match status" value="1"/>
</dbReference>
<dbReference type="PANTHER" id="PTHR13767:SF2">
    <property type="entry name" value="PSEUDOURIDYLATE SYNTHASE TRUB1"/>
    <property type="match status" value="1"/>
</dbReference>
<dbReference type="PANTHER" id="PTHR13767">
    <property type="entry name" value="TRNA-PSEUDOURIDINE SYNTHASE"/>
    <property type="match status" value="1"/>
</dbReference>
<dbReference type="Pfam" id="PF16198">
    <property type="entry name" value="TruB_C_2"/>
    <property type="match status" value="1"/>
</dbReference>
<dbReference type="Pfam" id="PF01509">
    <property type="entry name" value="TruB_N"/>
    <property type="match status" value="1"/>
</dbReference>
<dbReference type="SUPFAM" id="SSF55120">
    <property type="entry name" value="Pseudouridine synthase"/>
    <property type="match status" value="1"/>
</dbReference>
<reference key="1">
    <citation type="journal article" date="2005" name="Science">
        <title>Genome sequence of the PCE-dechlorinating bacterium Dehalococcoides ethenogenes.</title>
        <authorList>
            <person name="Seshadri R."/>
            <person name="Adrian L."/>
            <person name="Fouts D.E."/>
            <person name="Eisen J.A."/>
            <person name="Phillippy A.M."/>
            <person name="Methe B.A."/>
            <person name="Ward N.L."/>
            <person name="Nelson W.C."/>
            <person name="DeBoy R.T."/>
            <person name="Khouri H.M."/>
            <person name="Kolonay J.F."/>
            <person name="Dodson R.J."/>
            <person name="Daugherty S.C."/>
            <person name="Brinkac L.M."/>
            <person name="Sullivan S.A."/>
            <person name="Madupu R."/>
            <person name="Nelson K.E."/>
            <person name="Kang K.H."/>
            <person name="Impraim M."/>
            <person name="Tran K."/>
            <person name="Robinson J.M."/>
            <person name="Forberger H.A."/>
            <person name="Fraser C.M."/>
            <person name="Zinder S.H."/>
            <person name="Heidelberg J.F."/>
        </authorList>
    </citation>
    <scope>NUCLEOTIDE SEQUENCE [LARGE SCALE GENOMIC DNA]</scope>
    <source>
        <strain>ATCC BAA-2266 / KCTC 15142 / 195</strain>
    </source>
</reference>
<proteinExistence type="inferred from homology"/>
<name>TRUB_DEHM1</name>
<keyword id="KW-0413">Isomerase</keyword>
<keyword id="KW-0819">tRNA processing</keyword>
<gene>
    <name evidence="1" type="primary">truB</name>
    <name type="ordered locus">DET0981</name>
</gene>